<reference key="1">
    <citation type="submission" date="2006-12" db="EMBL/GenBank/DDBJ databases">
        <title>Complete sequence of chromosome 1 of Acidovorax sp. JS42.</title>
        <authorList>
            <person name="Copeland A."/>
            <person name="Lucas S."/>
            <person name="Lapidus A."/>
            <person name="Barry K."/>
            <person name="Detter J.C."/>
            <person name="Glavina del Rio T."/>
            <person name="Dalin E."/>
            <person name="Tice H."/>
            <person name="Pitluck S."/>
            <person name="Chertkov O."/>
            <person name="Brettin T."/>
            <person name="Bruce D."/>
            <person name="Han C."/>
            <person name="Tapia R."/>
            <person name="Gilna P."/>
            <person name="Schmutz J."/>
            <person name="Larimer F."/>
            <person name="Land M."/>
            <person name="Hauser L."/>
            <person name="Kyrpides N."/>
            <person name="Kim E."/>
            <person name="Stahl D."/>
            <person name="Richardson P."/>
        </authorList>
    </citation>
    <scope>NUCLEOTIDE SEQUENCE [LARGE SCALE GENOMIC DNA]</scope>
    <source>
        <strain>JS42</strain>
    </source>
</reference>
<evidence type="ECO:0000255" key="1">
    <source>
        <dbReference type="HAMAP-Rule" id="MF_00747"/>
    </source>
</evidence>
<comment type="function">
    <text evidence="1">Bifunctional enzyme which can phosphorylate or dephosphorylate isocitrate dehydrogenase (IDH) on a specific serine residue. This is a regulatory mechanism which enables bacteria to bypass the Krebs cycle via the glyoxylate shunt in response to the source of carbon. When bacteria are grown on glucose, IDH is fully active and unphosphorylated, but when grown on acetate or ethanol, the activity of IDH declines drastically concomitant with its phosphorylation.</text>
</comment>
<comment type="catalytic activity">
    <reaction evidence="1">
        <text>L-seryl-[isocitrate dehydrogenase] + ATP = O-phospho-L-seryl-[isocitrate dehydrogenase] + ADP + H(+)</text>
        <dbReference type="Rhea" id="RHEA:43540"/>
        <dbReference type="Rhea" id="RHEA-COMP:10605"/>
        <dbReference type="Rhea" id="RHEA-COMP:10606"/>
        <dbReference type="ChEBI" id="CHEBI:15378"/>
        <dbReference type="ChEBI" id="CHEBI:29999"/>
        <dbReference type="ChEBI" id="CHEBI:30616"/>
        <dbReference type="ChEBI" id="CHEBI:83421"/>
        <dbReference type="ChEBI" id="CHEBI:456216"/>
        <dbReference type="EC" id="2.7.11.5"/>
    </reaction>
</comment>
<comment type="subcellular location">
    <subcellularLocation>
        <location evidence="1">Cytoplasm</location>
    </subcellularLocation>
</comment>
<comment type="similarity">
    <text evidence="1">Belongs to the AceK family.</text>
</comment>
<keyword id="KW-0067">ATP-binding</keyword>
<keyword id="KW-0963">Cytoplasm</keyword>
<keyword id="KW-0329">Glyoxylate bypass</keyword>
<keyword id="KW-0378">Hydrolase</keyword>
<keyword id="KW-0418">Kinase</keyword>
<keyword id="KW-0547">Nucleotide-binding</keyword>
<keyword id="KW-0904">Protein phosphatase</keyword>
<keyword id="KW-0723">Serine/threonine-protein kinase</keyword>
<keyword id="KW-0808">Transferase</keyword>
<keyword id="KW-0816">Tricarboxylic acid cycle</keyword>
<protein>
    <recommendedName>
        <fullName evidence="1">Isocitrate dehydrogenase kinase/phosphatase</fullName>
        <shortName evidence="1">IDH kinase/phosphatase</shortName>
        <shortName evidence="1">IDHK/P</shortName>
        <ecNumber evidence="1">2.7.11.5</ecNumber>
        <ecNumber evidence="1">3.1.3.-</ecNumber>
    </recommendedName>
</protein>
<feature type="chain" id="PRO_0000288278" description="Isocitrate dehydrogenase kinase/phosphatase">
    <location>
        <begin position="1"/>
        <end position="609"/>
    </location>
</feature>
<feature type="active site" evidence="1">
    <location>
        <position position="381"/>
    </location>
</feature>
<feature type="binding site" evidence="1">
    <location>
        <begin position="325"/>
        <end position="331"/>
    </location>
    <ligand>
        <name>ATP</name>
        <dbReference type="ChEBI" id="CHEBI:30616"/>
    </ligand>
</feature>
<feature type="binding site" evidence="1">
    <location>
        <position position="346"/>
    </location>
    <ligand>
        <name>ATP</name>
        <dbReference type="ChEBI" id="CHEBI:30616"/>
    </ligand>
</feature>
<accession>A1WCB1</accession>
<proteinExistence type="inferred from homology"/>
<name>ACEK_ACISJ</name>
<dbReference type="EC" id="2.7.11.5" evidence="1"/>
<dbReference type="EC" id="3.1.3.-" evidence="1"/>
<dbReference type="EMBL" id="CP000539">
    <property type="protein sequence ID" value="ABM43886.1"/>
    <property type="molecule type" value="Genomic_DNA"/>
</dbReference>
<dbReference type="SMR" id="A1WCB1"/>
<dbReference type="STRING" id="232721.Ajs_3777"/>
<dbReference type="KEGG" id="ajs:Ajs_3777"/>
<dbReference type="eggNOG" id="COG4579">
    <property type="taxonomic scope" value="Bacteria"/>
</dbReference>
<dbReference type="HOGENOM" id="CLU_033804_1_1_4"/>
<dbReference type="Proteomes" id="UP000000645">
    <property type="component" value="Chromosome"/>
</dbReference>
<dbReference type="GO" id="GO:0005737">
    <property type="term" value="C:cytoplasm"/>
    <property type="evidence" value="ECO:0007669"/>
    <property type="project" value="UniProtKB-SubCell"/>
</dbReference>
<dbReference type="GO" id="GO:0008772">
    <property type="term" value="F:[isocitrate dehydrogenase (NADP+)] kinase activity"/>
    <property type="evidence" value="ECO:0007669"/>
    <property type="project" value="UniProtKB-UniRule"/>
</dbReference>
<dbReference type="GO" id="GO:0016208">
    <property type="term" value="F:AMP binding"/>
    <property type="evidence" value="ECO:0007669"/>
    <property type="project" value="TreeGrafter"/>
</dbReference>
<dbReference type="GO" id="GO:0005524">
    <property type="term" value="F:ATP binding"/>
    <property type="evidence" value="ECO:0007669"/>
    <property type="project" value="UniProtKB-UniRule"/>
</dbReference>
<dbReference type="GO" id="GO:0004721">
    <property type="term" value="F:phosphoprotein phosphatase activity"/>
    <property type="evidence" value="ECO:0007669"/>
    <property type="project" value="UniProtKB-KW"/>
</dbReference>
<dbReference type="GO" id="GO:0004674">
    <property type="term" value="F:protein serine/threonine kinase activity"/>
    <property type="evidence" value="ECO:0007669"/>
    <property type="project" value="UniProtKB-KW"/>
</dbReference>
<dbReference type="GO" id="GO:0006006">
    <property type="term" value="P:glucose metabolic process"/>
    <property type="evidence" value="ECO:0007669"/>
    <property type="project" value="InterPro"/>
</dbReference>
<dbReference type="GO" id="GO:0006097">
    <property type="term" value="P:glyoxylate cycle"/>
    <property type="evidence" value="ECO:0007669"/>
    <property type="project" value="UniProtKB-UniRule"/>
</dbReference>
<dbReference type="GO" id="GO:0006099">
    <property type="term" value="P:tricarboxylic acid cycle"/>
    <property type="evidence" value="ECO:0007669"/>
    <property type="project" value="UniProtKB-UniRule"/>
</dbReference>
<dbReference type="HAMAP" id="MF_00747">
    <property type="entry name" value="AceK"/>
    <property type="match status" value="1"/>
</dbReference>
<dbReference type="InterPro" id="IPR046855">
    <property type="entry name" value="AceK_kinase"/>
</dbReference>
<dbReference type="InterPro" id="IPR046854">
    <property type="entry name" value="AceK_regulatory"/>
</dbReference>
<dbReference type="InterPro" id="IPR010452">
    <property type="entry name" value="Isocitrate_DH_AceK"/>
</dbReference>
<dbReference type="NCBIfam" id="NF002804">
    <property type="entry name" value="PRK02946.1"/>
    <property type="match status" value="1"/>
</dbReference>
<dbReference type="PANTHER" id="PTHR39559">
    <property type="match status" value="1"/>
</dbReference>
<dbReference type="PANTHER" id="PTHR39559:SF1">
    <property type="entry name" value="ISOCITRATE DEHYDROGENASE KINASE_PHOSPHATASE"/>
    <property type="match status" value="1"/>
</dbReference>
<dbReference type="Pfam" id="PF06315">
    <property type="entry name" value="AceK_kinase"/>
    <property type="match status" value="1"/>
</dbReference>
<dbReference type="Pfam" id="PF20423">
    <property type="entry name" value="AceK_regulatory"/>
    <property type="match status" value="1"/>
</dbReference>
<dbReference type="PIRSF" id="PIRSF000719">
    <property type="entry name" value="AceK"/>
    <property type="match status" value="1"/>
</dbReference>
<gene>
    <name evidence="1" type="primary">aceK</name>
    <name type="ordered locus">Ajs_3777</name>
</gene>
<organism>
    <name type="scientific">Acidovorax sp. (strain JS42)</name>
    <dbReference type="NCBI Taxonomy" id="232721"/>
    <lineage>
        <taxon>Bacteria</taxon>
        <taxon>Pseudomonadati</taxon>
        <taxon>Pseudomonadota</taxon>
        <taxon>Betaproteobacteria</taxon>
        <taxon>Burkholderiales</taxon>
        <taxon>Comamonadaceae</taxon>
        <taxon>Acidovorax</taxon>
    </lineage>
</organism>
<sequence length="609" mass="71044">MFPERLDAPQAYDIAKAMMDGFNRHYRLFRAESARAKHRFETADWHGQQRAQRERIEFYDLRVRECVRRLDKEFNAGALPMDVWHQIKLHYIGLMVNHLQPELAETFFNSVTTKILHRTHFHNDFIFVRPAVSTEYIESDDPGARPTYRAYYPSRDNLHETVVRIVEHCALQRDFENLPRDAGHVVQALQQRLGAVKLRTNFQVQVLSSLFFRNKGAYLVGKVINGYNELPFALPILHGEDGRLLIDAVLFGENDLQMLFSFARAYFMVDMEIPSAYVQFLRSLMPRKPRAELYTALGLAKQGKTLFYRDFLHHLRYSTDKFRIAPGIKGMVMLVFDLPSFPYVFKLIKDQFPAPKDTTREQVQGKYLLVKQHDRVGRMADTLEYSLVAFPRERFSDELIEEIRRHAPSQIEISDRDGDGRQEVIIAHLYIERRMIPLNIHLQECFDTGLDKPEARSALEHAVTEYGNAIKDMVAANIFPGDMLWKNFGITRNGKVVFYDYDEIEYLTDCNFRRVPPPRCEEDEVSGEVWWPVGPHDVFPETFGPFLLGNDSVREAFMRHHADLLDVEFWQSHKERIQAGHLYDVFPYDSARRFRCASPSSFQTQGDST</sequence>